<keyword id="KW-0378">Hydrolase</keyword>
<keyword id="KW-0464">Manganese</keyword>
<keyword id="KW-0479">Metal-binding</keyword>
<keyword id="KW-0620">Polyamine biosynthesis</keyword>
<keyword id="KW-0661">Putrescine biosynthesis</keyword>
<keyword id="KW-1185">Reference proteome</keyword>
<keyword id="KW-0745">Spermidine biosynthesis</keyword>
<reference key="1">
    <citation type="submission" date="2007-08" db="EMBL/GenBank/DDBJ databases">
        <authorList>
            <consortium name="The Citrobacter koseri Genome Sequencing Project"/>
            <person name="McClelland M."/>
            <person name="Sanderson E.K."/>
            <person name="Porwollik S."/>
            <person name="Spieth J."/>
            <person name="Clifton W.S."/>
            <person name="Latreille P."/>
            <person name="Courtney L."/>
            <person name="Wang C."/>
            <person name="Pepin K."/>
            <person name="Bhonagiri V."/>
            <person name="Nash W."/>
            <person name="Johnson M."/>
            <person name="Thiruvilangam P."/>
            <person name="Wilson R."/>
        </authorList>
    </citation>
    <scope>NUCLEOTIDE SEQUENCE [LARGE SCALE GENOMIC DNA]</scope>
    <source>
        <strain>ATCC BAA-895 / CDC 4225-83 / SGSC4696</strain>
    </source>
</reference>
<feature type="chain" id="PRO_1000024277" description="Agmatinase">
    <location>
        <begin position="1"/>
        <end position="306"/>
    </location>
</feature>
<feature type="binding site" evidence="1">
    <location>
        <position position="126"/>
    </location>
    <ligand>
        <name>Mn(2+)</name>
        <dbReference type="ChEBI" id="CHEBI:29035"/>
    </ligand>
</feature>
<feature type="binding site" evidence="1">
    <location>
        <position position="149"/>
    </location>
    <ligand>
        <name>Mn(2+)</name>
        <dbReference type="ChEBI" id="CHEBI:29035"/>
    </ligand>
</feature>
<feature type="binding site" evidence="1">
    <location>
        <position position="151"/>
    </location>
    <ligand>
        <name>Mn(2+)</name>
        <dbReference type="ChEBI" id="CHEBI:29035"/>
    </ligand>
</feature>
<feature type="binding site" evidence="1">
    <location>
        <position position="153"/>
    </location>
    <ligand>
        <name>Mn(2+)</name>
        <dbReference type="ChEBI" id="CHEBI:29035"/>
    </ligand>
</feature>
<feature type="binding site" evidence="1">
    <location>
        <position position="230"/>
    </location>
    <ligand>
        <name>Mn(2+)</name>
        <dbReference type="ChEBI" id="CHEBI:29035"/>
    </ligand>
</feature>
<feature type="binding site" evidence="1">
    <location>
        <position position="232"/>
    </location>
    <ligand>
        <name>Mn(2+)</name>
        <dbReference type="ChEBI" id="CHEBI:29035"/>
    </ligand>
</feature>
<gene>
    <name evidence="1" type="primary">speB</name>
    <name type="ordered locus">CKO_04314</name>
</gene>
<sequence length="306" mass="33525">MSTLGHQYDNSLVSNAFGFLRLPLNFQPYDSDADWVITGVPFDMATSGRAGGRHGPAAIRQVSTNLAWEHNRFPWNFDMRERLNVVDCGDLVYAFGDAREMSEKLQAHAEKLLSAGKRMLSFGGDHFVTLPLLRAHAKHFGKMALVHFDAHTDTYANGCEFDHGTMFYTAPKEGLIDPNHSVQIGIRTEFDKDNGFTVLDACQVNDRGVDDIIAQVNQIVGDMPVYLTFDIDCLDPAFAPGTGTPVIGGLTSDRAIKLVRGLKDLNIVGMDVVEVAPAYDQSEITALAAATLALEMLYIQAAKKGE</sequence>
<dbReference type="EC" id="3.5.3.11" evidence="1"/>
<dbReference type="EMBL" id="CP000822">
    <property type="protein sequence ID" value="ABV15371.1"/>
    <property type="molecule type" value="Genomic_DNA"/>
</dbReference>
<dbReference type="RefSeq" id="WP_012135054.1">
    <property type="nucleotide sequence ID" value="NC_009792.1"/>
</dbReference>
<dbReference type="SMR" id="A8APF8"/>
<dbReference type="STRING" id="290338.CKO_04314"/>
<dbReference type="GeneID" id="45137905"/>
<dbReference type="KEGG" id="cko:CKO_04314"/>
<dbReference type="HOGENOM" id="CLU_039478_0_0_6"/>
<dbReference type="OrthoDB" id="9789727at2"/>
<dbReference type="UniPathway" id="UPA00534">
    <property type="reaction ID" value="UER00287"/>
</dbReference>
<dbReference type="Proteomes" id="UP000008148">
    <property type="component" value="Chromosome"/>
</dbReference>
<dbReference type="GO" id="GO:0008783">
    <property type="term" value="F:agmatinase activity"/>
    <property type="evidence" value="ECO:0007669"/>
    <property type="project" value="UniProtKB-UniRule"/>
</dbReference>
<dbReference type="GO" id="GO:0030145">
    <property type="term" value="F:manganese ion binding"/>
    <property type="evidence" value="ECO:0007669"/>
    <property type="project" value="InterPro"/>
</dbReference>
<dbReference type="GO" id="GO:0033389">
    <property type="term" value="P:putrescine biosynthetic process from arginine, via agmatine"/>
    <property type="evidence" value="ECO:0007669"/>
    <property type="project" value="TreeGrafter"/>
</dbReference>
<dbReference type="GO" id="GO:0008295">
    <property type="term" value="P:spermidine biosynthetic process"/>
    <property type="evidence" value="ECO:0007669"/>
    <property type="project" value="UniProtKB-UniRule"/>
</dbReference>
<dbReference type="CDD" id="cd11592">
    <property type="entry name" value="Agmatinase_PAH"/>
    <property type="match status" value="1"/>
</dbReference>
<dbReference type="FunFam" id="3.40.800.10:FF:000001">
    <property type="entry name" value="Agmatinase"/>
    <property type="match status" value="1"/>
</dbReference>
<dbReference type="Gene3D" id="3.40.800.10">
    <property type="entry name" value="Ureohydrolase domain"/>
    <property type="match status" value="1"/>
</dbReference>
<dbReference type="HAMAP" id="MF_01418">
    <property type="entry name" value="SpeB"/>
    <property type="match status" value="1"/>
</dbReference>
<dbReference type="InterPro" id="IPR023694">
    <property type="entry name" value="Agmatinase"/>
</dbReference>
<dbReference type="InterPro" id="IPR005925">
    <property type="entry name" value="Agmatinase-rel"/>
</dbReference>
<dbReference type="InterPro" id="IPR006035">
    <property type="entry name" value="Ureohydrolase"/>
</dbReference>
<dbReference type="InterPro" id="IPR023696">
    <property type="entry name" value="Ureohydrolase_dom_sf"/>
</dbReference>
<dbReference type="InterPro" id="IPR020855">
    <property type="entry name" value="Ureohydrolase_Mn_BS"/>
</dbReference>
<dbReference type="NCBIfam" id="TIGR01230">
    <property type="entry name" value="agmatinase"/>
    <property type="match status" value="1"/>
</dbReference>
<dbReference type="NCBIfam" id="NF002564">
    <property type="entry name" value="PRK02190.1"/>
    <property type="match status" value="1"/>
</dbReference>
<dbReference type="PANTHER" id="PTHR11358">
    <property type="entry name" value="ARGINASE/AGMATINASE"/>
    <property type="match status" value="1"/>
</dbReference>
<dbReference type="PANTHER" id="PTHR11358:SF26">
    <property type="entry name" value="GUANIDINO ACID HYDROLASE, MITOCHONDRIAL"/>
    <property type="match status" value="1"/>
</dbReference>
<dbReference type="Pfam" id="PF00491">
    <property type="entry name" value="Arginase"/>
    <property type="match status" value="1"/>
</dbReference>
<dbReference type="PIRSF" id="PIRSF036979">
    <property type="entry name" value="Arginase"/>
    <property type="match status" value="1"/>
</dbReference>
<dbReference type="SUPFAM" id="SSF52768">
    <property type="entry name" value="Arginase/deacetylase"/>
    <property type="match status" value="1"/>
</dbReference>
<dbReference type="PROSITE" id="PS01053">
    <property type="entry name" value="ARGINASE_1"/>
    <property type="match status" value="1"/>
</dbReference>
<dbReference type="PROSITE" id="PS51409">
    <property type="entry name" value="ARGINASE_2"/>
    <property type="match status" value="1"/>
</dbReference>
<organism>
    <name type="scientific">Citrobacter koseri (strain ATCC BAA-895 / CDC 4225-83 / SGSC4696)</name>
    <dbReference type="NCBI Taxonomy" id="290338"/>
    <lineage>
        <taxon>Bacteria</taxon>
        <taxon>Pseudomonadati</taxon>
        <taxon>Pseudomonadota</taxon>
        <taxon>Gammaproteobacteria</taxon>
        <taxon>Enterobacterales</taxon>
        <taxon>Enterobacteriaceae</taxon>
        <taxon>Citrobacter</taxon>
    </lineage>
</organism>
<protein>
    <recommendedName>
        <fullName evidence="1">Agmatinase</fullName>
        <ecNumber evidence="1">3.5.3.11</ecNumber>
    </recommendedName>
    <alternativeName>
        <fullName evidence="1">Agmatine ureohydrolase</fullName>
        <shortName evidence="1">AUH</shortName>
    </alternativeName>
</protein>
<accession>A8APF8</accession>
<name>SPEB_CITK8</name>
<proteinExistence type="inferred from homology"/>
<comment type="function">
    <text evidence="1">Catalyzes the formation of putrescine from agmatine.</text>
</comment>
<comment type="catalytic activity">
    <reaction evidence="1">
        <text>agmatine + H2O = urea + putrescine</text>
        <dbReference type="Rhea" id="RHEA:13929"/>
        <dbReference type="ChEBI" id="CHEBI:15377"/>
        <dbReference type="ChEBI" id="CHEBI:16199"/>
        <dbReference type="ChEBI" id="CHEBI:58145"/>
        <dbReference type="ChEBI" id="CHEBI:326268"/>
        <dbReference type="EC" id="3.5.3.11"/>
    </reaction>
</comment>
<comment type="cofactor">
    <cofactor evidence="1">
        <name>Mn(2+)</name>
        <dbReference type="ChEBI" id="CHEBI:29035"/>
    </cofactor>
</comment>
<comment type="pathway">
    <text evidence="1">Amine and polyamine biosynthesis; putrescine biosynthesis via agmatine pathway; putrescine from agmatine: step 1/1.</text>
</comment>
<comment type="similarity">
    <text evidence="1">Belongs to the arginase family. Agmatinase subfamily.</text>
</comment>
<evidence type="ECO:0000255" key="1">
    <source>
        <dbReference type="HAMAP-Rule" id="MF_01418"/>
    </source>
</evidence>